<name>SH3L2_HUMAN</name>
<evidence type="ECO:0000255" key="1"/>
<evidence type="ECO:0000269" key="2">
    <source>
    </source>
</evidence>
<evidence type="ECO:0000305" key="3"/>
<evidence type="ECO:0007829" key="4">
    <source>
        <dbReference type="PDB" id="2CT6"/>
    </source>
</evidence>
<proteinExistence type="evidence at protein level"/>
<gene>
    <name type="primary">SH3BGRL2</name>
    <name type="synonym">FASH3</name>
</gene>
<comment type="subcellular location">
    <subcellularLocation>
        <location evidence="2">Nucleus</location>
    </subcellularLocation>
</comment>
<comment type="tissue specificity">
    <text evidence="2">Highly expressed in brain, placenta, liver and kidney. Expressed in retina.</text>
</comment>
<comment type="similarity">
    <text evidence="3">Belongs to the SH3BGR family.</text>
</comment>
<feature type="chain" id="PRO_0000220747" description="SH3 domain-binding glutamic acid-rich-like protein 2">
    <location>
        <begin position="1"/>
        <end position="107"/>
    </location>
</feature>
<feature type="short sequence motif" description="SH3-binding" evidence="1">
    <location>
        <begin position="61"/>
        <end position="67"/>
    </location>
</feature>
<feature type="sequence conflict" description="In Ref. 6; AAH70059." evidence="3" ref="6">
    <original>I</original>
    <variation>V</variation>
    <location>
        <position position="7"/>
    </location>
</feature>
<feature type="sequence conflict" description="In Ref. 6; AAH40489." evidence="3" ref="6">
    <original>I</original>
    <variation>T</variation>
    <location>
        <position position="39"/>
    </location>
</feature>
<feature type="strand" evidence="4">
    <location>
        <begin position="3"/>
        <end position="7"/>
    </location>
</feature>
<feature type="helix" evidence="4">
    <location>
        <begin position="14"/>
        <end position="29"/>
    </location>
</feature>
<feature type="strand" evidence="4">
    <location>
        <begin position="34"/>
        <end position="38"/>
    </location>
</feature>
<feature type="turn" evidence="4">
    <location>
        <begin position="39"/>
        <end position="41"/>
    </location>
</feature>
<feature type="helix" evidence="4">
    <location>
        <begin position="43"/>
        <end position="51"/>
    </location>
</feature>
<feature type="turn" evidence="4">
    <location>
        <begin position="55"/>
        <end position="57"/>
    </location>
</feature>
<feature type="strand" evidence="4">
    <location>
        <begin position="60"/>
        <end position="63"/>
    </location>
</feature>
<feature type="strand" evidence="4">
    <location>
        <begin position="68"/>
        <end position="71"/>
    </location>
</feature>
<feature type="strand" evidence="4">
    <location>
        <begin position="74"/>
        <end position="78"/>
    </location>
</feature>
<feature type="helix" evidence="4">
    <location>
        <begin position="79"/>
        <end position="86"/>
    </location>
</feature>
<feature type="turn" evidence="4">
    <location>
        <begin position="87"/>
        <end position="89"/>
    </location>
</feature>
<feature type="helix" evidence="4">
    <location>
        <begin position="91"/>
        <end position="95"/>
    </location>
</feature>
<protein>
    <recommendedName>
        <fullName>SH3 domain-binding glutamic acid-rich-like protein 2</fullName>
    </recommendedName>
    <alternativeName>
        <fullName>Fovea-associated SH3 domain-binding protein</fullName>
    </alternativeName>
</protein>
<dbReference type="EMBL" id="AJ297972">
    <property type="protein sequence ID" value="CAC35771.1"/>
    <property type="molecule type" value="mRNA"/>
</dbReference>
<dbReference type="EMBL" id="AF340151">
    <property type="protein sequence ID" value="AAK37526.1"/>
    <property type="molecule type" value="mRNA"/>
</dbReference>
<dbReference type="EMBL" id="AK311757">
    <property type="protein sequence ID" value="BAG34700.1"/>
    <property type="molecule type" value="mRNA"/>
</dbReference>
<dbReference type="EMBL" id="AL035700">
    <property type="status" value="NOT_ANNOTATED_CDS"/>
    <property type="molecule type" value="Genomic_DNA"/>
</dbReference>
<dbReference type="EMBL" id="AL451064">
    <property type="status" value="NOT_ANNOTATED_CDS"/>
    <property type="molecule type" value="Genomic_DNA"/>
</dbReference>
<dbReference type="EMBL" id="CH471051">
    <property type="protein sequence ID" value="EAW48703.1"/>
    <property type="molecule type" value="Genomic_DNA"/>
</dbReference>
<dbReference type="EMBL" id="BC040489">
    <property type="protein sequence ID" value="AAH40489.2"/>
    <property type="molecule type" value="mRNA"/>
</dbReference>
<dbReference type="EMBL" id="BC052987">
    <property type="protein sequence ID" value="AAH52987.2"/>
    <property type="molecule type" value="mRNA"/>
</dbReference>
<dbReference type="EMBL" id="BC060799">
    <property type="protein sequence ID" value="AAH60799.2"/>
    <property type="molecule type" value="mRNA"/>
</dbReference>
<dbReference type="EMBL" id="BC070059">
    <property type="protein sequence ID" value="AAH70059.2"/>
    <property type="molecule type" value="mRNA"/>
</dbReference>
<dbReference type="EMBL" id="BC109043">
    <property type="protein sequence ID" value="AAI09044.2"/>
    <property type="molecule type" value="mRNA"/>
</dbReference>
<dbReference type="EMBL" id="BC109044">
    <property type="protein sequence ID" value="AAI09045.2"/>
    <property type="molecule type" value="mRNA"/>
</dbReference>
<dbReference type="CCDS" id="CCDS4991.1"/>
<dbReference type="RefSeq" id="NP_113657.1">
    <property type="nucleotide sequence ID" value="NM_031469.4"/>
</dbReference>
<dbReference type="RefSeq" id="XP_016866833.1">
    <property type="nucleotide sequence ID" value="XM_017011344.1"/>
</dbReference>
<dbReference type="RefSeq" id="XP_047275347.1">
    <property type="nucleotide sequence ID" value="XM_047419391.1"/>
</dbReference>
<dbReference type="RefSeq" id="XP_047275348.1">
    <property type="nucleotide sequence ID" value="XM_047419392.1"/>
</dbReference>
<dbReference type="RefSeq" id="XP_054212483.1">
    <property type="nucleotide sequence ID" value="XM_054356508.1"/>
</dbReference>
<dbReference type="RefSeq" id="XP_054212484.1">
    <property type="nucleotide sequence ID" value="XM_054356509.1"/>
</dbReference>
<dbReference type="PDB" id="2CT6">
    <property type="method" value="NMR"/>
    <property type="chains" value="A=1-98"/>
</dbReference>
<dbReference type="PDBsum" id="2CT6"/>
<dbReference type="BMRB" id="Q9UJC5"/>
<dbReference type="SMR" id="Q9UJC5"/>
<dbReference type="BioGRID" id="123733">
    <property type="interactions" value="30"/>
</dbReference>
<dbReference type="FunCoup" id="Q9UJC5">
    <property type="interactions" value="1834"/>
</dbReference>
<dbReference type="IntAct" id="Q9UJC5">
    <property type="interactions" value="10"/>
</dbReference>
<dbReference type="STRING" id="9606.ENSP00000358853"/>
<dbReference type="iPTMnet" id="Q9UJC5"/>
<dbReference type="PhosphoSitePlus" id="Q9UJC5"/>
<dbReference type="SwissPalm" id="Q9UJC5"/>
<dbReference type="BioMuta" id="SH3BGRL2"/>
<dbReference type="DMDM" id="24638476"/>
<dbReference type="jPOST" id="Q9UJC5"/>
<dbReference type="MassIVE" id="Q9UJC5"/>
<dbReference type="PaxDb" id="9606-ENSP00000358853"/>
<dbReference type="PeptideAtlas" id="Q9UJC5"/>
<dbReference type="ProteomicsDB" id="84618"/>
<dbReference type="Pumba" id="Q9UJC5"/>
<dbReference type="TopDownProteomics" id="Q9UJC5"/>
<dbReference type="Antibodypedia" id="64235">
    <property type="antibodies" value="22 antibodies from 14 providers"/>
</dbReference>
<dbReference type="DNASU" id="83699"/>
<dbReference type="Ensembl" id="ENST00000369838.6">
    <property type="protein sequence ID" value="ENSP00000358853.4"/>
    <property type="gene ID" value="ENSG00000198478.9"/>
</dbReference>
<dbReference type="GeneID" id="83699"/>
<dbReference type="KEGG" id="hsa:83699"/>
<dbReference type="MANE-Select" id="ENST00000369838.6">
    <property type="protein sequence ID" value="ENSP00000358853.4"/>
    <property type="RefSeq nucleotide sequence ID" value="NM_031469.4"/>
    <property type="RefSeq protein sequence ID" value="NP_113657.1"/>
</dbReference>
<dbReference type="UCSC" id="uc003piz.2">
    <property type="organism name" value="human"/>
</dbReference>
<dbReference type="AGR" id="HGNC:15567"/>
<dbReference type="CTD" id="83699"/>
<dbReference type="DisGeNET" id="83699"/>
<dbReference type="GeneCards" id="SH3BGRL2"/>
<dbReference type="HGNC" id="HGNC:15567">
    <property type="gene designation" value="SH3BGRL2"/>
</dbReference>
<dbReference type="HPA" id="ENSG00000198478">
    <property type="expression patterns" value="Tissue enhanced (salivary)"/>
</dbReference>
<dbReference type="MIM" id="615678">
    <property type="type" value="gene"/>
</dbReference>
<dbReference type="neXtProt" id="NX_Q9UJC5"/>
<dbReference type="OpenTargets" id="ENSG00000198478"/>
<dbReference type="PharmGKB" id="PA37978"/>
<dbReference type="VEuPathDB" id="HostDB:ENSG00000198478"/>
<dbReference type="eggNOG" id="KOG4023">
    <property type="taxonomic scope" value="Eukaryota"/>
</dbReference>
<dbReference type="GeneTree" id="ENSGT00940000159157"/>
<dbReference type="HOGENOM" id="CLU_084862_3_0_1"/>
<dbReference type="InParanoid" id="Q9UJC5"/>
<dbReference type="OMA" id="MYKNIPK"/>
<dbReference type="OrthoDB" id="9932926at2759"/>
<dbReference type="PAN-GO" id="Q9UJC5">
    <property type="GO annotations" value="0 GO annotations based on evolutionary models"/>
</dbReference>
<dbReference type="PhylomeDB" id="Q9UJC5"/>
<dbReference type="TreeFam" id="TF105574"/>
<dbReference type="PathwayCommons" id="Q9UJC5"/>
<dbReference type="SignaLink" id="Q9UJC5"/>
<dbReference type="BioGRID-ORCS" id="83699">
    <property type="hits" value="5 hits in 1148 CRISPR screens"/>
</dbReference>
<dbReference type="ChiTaRS" id="SH3BGRL2">
    <property type="organism name" value="human"/>
</dbReference>
<dbReference type="EvolutionaryTrace" id="Q9UJC5"/>
<dbReference type="GenomeRNAi" id="83699"/>
<dbReference type="Pharos" id="Q9UJC5">
    <property type="development level" value="Tdark"/>
</dbReference>
<dbReference type="PRO" id="PR:Q9UJC5"/>
<dbReference type="Proteomes" id="UP000005640">
    <property type="component" value="Chromosome 6"/>
</dbReference>
<dbReference type="RNAct" id="Q9UJC5">
    <property type="molecule type" value="protein"/>
</dbReference>
<dbReference type="Bgee" id="ENSG00000198478">
    <property type="expression patterns" value="Expressed in parotid gland and 188 other cell types or tissues"/>
</dbReference>
<dbReference type="GO" id="GO:0005737">
    <property type="term" value="C:cytoplasm"/>
    <property type="evidence" value="ECO:0000318"/>
    <property type="project" value="GO_Central"/>
</dbReference>
<dbReference type="GO" id="GO:0031965">
    <property type="term" value="C:nuclear membrane"/>
    <property type="evidence" value="ECO:0000314"/>
    <property type="project" value="HPA"/>
</dbReference>
<dbReference type="GO" id="GO:0005654">
    <property type="term" value="C:nucleoplasm"/>
    <property type="evidence" value="ECO:0000314"/>
    <property type="project" value="HPA"/>
</dbReference>
<dbReference type="GO" id="GO:0017124">
    <property type="term" value="F:SH3 domain binding"/>
    <property type="evidence" value="ECO:0007669"/>
    <property type="project" value="UniProtKB-KW"/>
</dbReference>
<dbReference type="CDD" id="cd03030">
    <property type="entry name" value="GRX_SH3BGR"/>
    <property type="match status" value="1"/>
</dbReference>
<dbReference type="FunFam" id="3.40.30.10:FF:000065">
    <property type="entry name" value="SH3 domain-binding glutamic acid-rich-like protein"/>
    <property type="match status" value="1"/>
</dbReference>
<dbReference type="Gene3D" id="3.40.30.10">
    <property type="entry name" value="Glutaredoxin"/>
    <property type="match status" value="1"/>
</dbReference>
<dbReference type="InterPro" id="IPR006993">
    <property type="entry name" value="Glut_rich_SH3-bd"/>
</dbReference>
<dbReference type="InterPro" id="IPR051033">
    <property type="entry name" value="SH3BGR"/>
</dbReference>
<dbReference type="InterPro" id="IPR036249">
    <property type="entry name" value="Thioredoxin-like_sf"/>
</dbReference>
<dbReference type="PANTHER" id="PTHR12232">
    <property type="entry name" value="SH3 DOMAIN-BINDING GLUTAMIC ACID-RICH-LIKE PROTEIN"/>
    <property type="match status" value="1"/>
</dbReference>
<dbReference type="PANTHER" id="PTHR12232:SF4">
    <property type="entry name" value="SH3 DOMAIN-BINDING GLUTAMIC ACID-RICH-LIKE PROTEIN 2"/>
    <property type="match status" value="1"/>
</dbReference>
<dbReference type="Pfam" id="PF04908">
    <property type="entry name" value="SH3BGR"/>
    <property type="match status" value="1"/>
</dbReference>
<dbReference type="PIRSF" id="PIRSF008142">
    <property type="entry name" value="SH3-bind_E-rich_L"/>
    <property type="match status" value="1"/>
</dbReference>
<dbReference type="SUPFAM" id="SSF52833">
    <property type="entry name" value="Thioredoxin-like"/>
    <property type="match status" value="1"/>
</dbReference>
<keyword id="KW-0002">3D-structure</keyword>
<keyword id="KW-0539">Nucleus</keyword>
<keyword id="KW-1267">Proteomics identification</keyword>
<keyword id="KW-1185">Reference proteome</keyword>
<keyword id="KW-0729">SH3-binding</keyword>
<sequence>MVIRVFIASSSGFVAIKKKQQDVVRFLEANKIEFEEVDITMSEEQRQWMYKNVPPEKKPTQGNPLPPQIFNGDRYCGDYDSFFESKESNTVFSFLGLKPRLASKAEP</sequence>
<accession>Q9UJC5</accession>
<accession>A8MQU2</accession>
<accession>Q2VPC2</accession>
<accession>Q5VV96</accession>
<accession>Q6NSK8</accession>
<accession>Q6P9E8</accession>
<accession>Q7Z734</accession>
<accession>Q8IWD3</accession>
<accession>Q9BPY5</accession>
<reference key="1">
    <citation type="journal article" date="2002" name="Gene">
        <title>The identification of a novel human homologue of the SH3 binding glutamic acid-rich (SH3BGR) gene establishes a new family of highly conserved small proteins related to Thioredoxin Superfamily.</title>
        <authorList>
            <person name="Mazzocco M."/>
            <person name="Maffei M."/>
            <person name="Egeo A."/>
            <person name="Vergano A."/>
            <person name="Arrigo P."/>
            <person name="Di Lisi R."/>
            <person name="Ghiotto F."/>
            <person name="Scartezzini P."/>
        </authorList>
    </citation>
    <scope>NUCLEOTIDE SEQUENCE [MRNA]</scope>
    <scope>SUBCELLULAR LOCATION</scope>
    <scope>TISSUE SPECIFICITY</scope>
</reference>
<reference key="2">
    <citation type="submission" date="2001-01" db="EMBL/GenBank/DDBJ databases">
        <title>Characterization of a novel candidate gene, FASH3, expressed in the primate fovea and linked to the disease gene, ELOVL4, associated with Stargardt-like dominant progressive macular dystrophy.</title>
        <authorList>
            <person name="Bowes Rickman C."/>
            <person name="Yarovinsky T.O."/>
            <person name="McKay B.S."/>
            <person name="Stone E.M."/>
            <person name="Ritter R."/>
            <person name="Rickman D.W."/>
            <person name="Edwards A.O."/>
        </authorList>
    </citation>
    <scope>NUCLEOTIDE SEQUENCE [MRNA]</scope>
</reference>
<reference key="3">
    <citation type="journal article" date="2004" name="Nat. Genet.">
        <title>Complete sequencing and characterization of 21,243 full-length human cDNAs.</title>
        <authorList>
            <person name="Ota T."/>
            <person name="Suzuki Y."/>
            <person name="Nishikawa T."/>
            <person name="Otsuki T."/>
            <person name="Sugiyama T."/>
            <person name="Irie R."/>
            <person name="Wakamatsu A."/>
            <person name="Hayashi K."/>
            <person name="Sato H."/>
            <person name="Nagai K."/>
            <person name="Kimura K."/>
            <person name="Makita H."/>
            <person name="Sekine M."/>
            <person name="Obayashi M."/>
            <person name="Nishi T."/>
            <person name="Shibahara T."/>
            <person name="Tanaka T."/>
            <person name="Ishii S."/>
            <person name="Yamamoto J."/>
            <person name="Saito K."/>
            <person name="Kawai Y."/>
            <person name="Isono Y."/>
            <person name="Nakamura Y."/>
            <person name="Nagahari K."/>
            <person name="Murakami K."/>
            <person name="Yasuda T."/>
            <person name="Iwayanagi T."/>
            <person name="Wagatsuma M."/>
            <person name="Shiratori A."/>
            <person name="Sudo H."/>
            <person name="Hosoiri T."/>
            <person name="Kaku Y."/>
            <person name="Kodaira H."/>
            <person name="Kondo H."/>
            <person name="Sugawara M."/>
            <person name="Takahashi M."/>
            <person name="Kanda K."/>
            <person name="Yokoi T."/>
            <person name="Furuya T."/>
            <person name="Kikkawa E."/>
            <person name="Omura Y."/>
            <person name="Abe K."/>
            <person name="Kamihara K."/>
            <person name="Katsuta N."/>
            <person name="Sato K."/>
            <person name="Tanikawa M."/>
            <person name="Yamazaki M."/>
            <person name="Ninomiya K."/>
            <person name="Ishibashi T."/>
            <person name="Yamashita H."/>
            <person name="Murakawa K."/>
            <person name="Fujimori K."/>
            <person name="Tanai H."/>
            <person name="Kimata M."/>
            <person name="Watanabe M."/>
            <person name="Hiraoka S."/>
            <person name="Chiba Y."/>
            <person name="Ishida S."/>
            <person name="Ono Y."/>
            <person name="Takiguchi S."/>
            <person name="Watanabe S."/>
            <person name="Yosida M."/>
            <person name="Hotuta T."/>
            <person name="Kusano J."/>
            <person name="Kanehori K."/>
            <person name="Takahashi-Fujii A."/>
            <person name="Hara H."/>
            <person name="Tanase T.-O."/>
            <person name="Nomura Y."/>
            <person name="Togiya S."/>
            <person name="Komai F."/>
            <person name="Hara R."/>
            <person name="Takeuchi K."/>
            <person name="Arita M."/>
            <person name="Imose N."/>
            <person name="Musashino K."/>
            <person name="Yuuki H."/>
            <person name="Oshima A."/>
            <person name="Sasaki N."/>
            <person name="Aotsuka S."/>
            <person name="Yoshikawa Y."/>
            <person name="Matsunawa H."/>
            <person name="Ichihara T."/>
            <person name="Shiohata N."/>
            <person name="Sano S."/>
            <person name="Moriya S."/>
            <person name="Momiyama H."/>
            <person name="Satoh N."/>
            <person name="Takami S."/>
            <person name="Terashima Y."/>
            <person name="Suzuki O."/>
            <person name="Nakagawa S."/>
            <person name="Senoh A."/>
            <person name="Mizoguchi H."/>
            <person name="Goto Y."/>
            <person name="Shimizu F."/>
            <person name="Wakebe H."/>
            <person name="Hishigaki H."/>
            <person name="Watanabe T."/>
            <person name="Sugiyama A."/>
            <person name="Takemoto M."/>
            <person name="Kawakami B."/>
            <person name="Yamazaki M."/>
            <person name="Watanabe K."/>
            <person name="Kumagai A."/>
            <person name="Itakura S."/>
            <person name="Fukuzumi Y."/>
            <person name="Fujimori Y."/>
            <person name="Komiyama M."/>
            <person name="Tashiro H."/>
            <person name="Tanigami A."/>
            <person name="Fujiwara T."/>
            <person name="Ono T."/>
            <person name="Yamada K."/>
            <person name="Fujii Y."/>
            <person name="Ozaki K."/>
            <person name="Hirao M."/>
            <person name="Ohmori Y."/>
            <person name="Kawabata A."/>
            <person name="Hikiji T."/>
            <person name="Kobatake N."/>
            <person name="Inagaki H."/>
            <person name="Ikema Y."/>
            <person name="Okamoto S."/>
            <person name="Okitani R."/>
            <person name="Kawakami T."/>
            <person name="Noguchi S."/>
            <person name="Itoh T."/>
            <person name="Shigeta K."/>
            <person name="Senba T."/>
            <person name="Matsumura K."/>
            <person name="Nakajima Y."/>
            <person name="Mizuno T."/>
            <person name="Morinaga M."/>
            <person name="Sasaki M."/>
            <person name="Togashi T."/>
            <person name="Oyama M."/>
            <person name="Hata H."/>
            <person name="Watanabe M."/>
            <person name="Komatsu T."/>
            <person name="Mizushima-Sugano J."/>
            <person name="Satoh T."/>
            <person name="Shirai Y."/>
            <person name="Takahashi Y."/>
            <person name="Nakagawa K."/>
            <person name="Okumura K."/>
            <person name="Nagase T."/>
            <person name="Nomura N."/>
            <person name="Kikuchi H."/>
            <person name="Masuho Y."/>
            <person name="Yamashita R."/>
            <person name="Nakai K."/>
            <person name="Yada T."/>
            <person name="Nakamura Y."/>
            <person name="Ohara O."/>
            <person name="Isogai T."/>
            <person name="Sugano S."/>
        </authorList>
    </citation>
    <scope>NUCLEOTIDE SEQUENCE [LARGE SCALE MRNA]</scope>
    <source>
        <tissue>Brain</tissue>
    </source>
</reference>
<reference key="4">
    <citation type="journal article" date="2003" name="Nature">
        <title>The DNA sequence and analysis of human chromosome 6.</title>
        <authorList>
            <person name="Mungall A.J."/>
            <person name="Palmer S.A."/>
            <person name="Sims S.K."/>
            <person name="Edwards C.A."/>
            <person name="Ashurst J.L."/>
            <person name="Wilming L."/>
            <person name="Jones M.C."/>
            <person name="Horton R."/>
            <person name="Hunt S.E."/>
            <person name="Scott C.E."/>
            <person name="Gilbert J.G.R."/>
            <person name="Clamp M.E."/>
            <person name="Bethel G."/>
            <person name="Milne S."/>
            <person name="Ainscough R."/>
            <person name="Almeida J.P."/>
            <person name="Ambrose K.D."/>
            <person name="Andrews T.D."/>
            <person name="Ashwell R.I.S."/>
            <person name="Babbage A.K."/>
            <person name="Bagguley C.L."/>
            <person name="Bailey J."/>
            <person name="Banerjee R."/>
            <person name="Barker D.J."/>
            <person name="Barlow K.F."/>
            <person name="Bates K."/>
            <person name="Beare D.M."/>
            <person name="Beasley H."/>
            <person name="Beasley O."/>
            <person name="Bird C.P."/>
            <person name="Blakey S.E."/>
            <person name="Bray-Allen S."/>
            <person name="Brook J."/>
            <person name="Brown A.J."/>
            <person name="Brown J.Y."/>
            <person name="Burford D.C."/>
            <person name="Burrill W."/>
            <person name="Burton J."/>
            <person name="Carder C."/>
            <person name="Carter N.P."/>
            <person name="Chapman J.C."/>
            <person name="Clark S.Y."/>
            <person name="Clark G."/>
            <person name="Clee C.M."/>
            <person name="Clegg S."/>
            <person name="Cobley V."/>
            <person name="Collier R.E."/>
            <person name="Collins J.E."/>
            <person name="Colman L.K."/>
            <person name="Corby N.R."/>
            <person name="Coville G.J."/>
            <person name="Culley K.M."/>
            <person name="Dhami P."/>
            <person name="Davies J."/>
            <person name="Dunn M."/>
            <person name="Earthrowl M.E."/>
            <person name="Ellington A.E."/>
            <person name="Evans K.A."/>
            <person name="Faulkner L."/>
            <person name="Francis M.D."/>
            <person name="Frankish A."/>
            <person name="Frankland J."/>
            <person name="French L."/>
            <person name="Garner P."/>
            <person name="Garnett J."/>
            <person name="Ghori M.J."/>
            <person name="Gilby L.M."/>
            <person name="Gillson C.J."/>
            <person name="Glithero R.J."/>
            <person name="Grafham D.V."/>
            <person name="Grant M."/>
            <person name="Gribble S."/>
            <person name="Griffiths C."/>
            <person name="Griffiths M.N.D."/>
            <person name="Hall R."/>
            <person name="Halls K.S."/>
            <person name="Hammond S."/>
            <person name="Harley J.L."/>
            <person name="Hart E.A."/>
            <person name="Heath P.D."/>
            <person name="Heathcott R."/>
            <person name="Holmes S.J."/>
            <person name="Howden P.J."/>
            <person name="Howe K.L."/>
            <person name="Howell G.R."/>
            <person name="Huckle E."/>
            <person name="Humphray S.J."/>
            <person name="Humphries M.D."/>
            <person name="Hunt A.R."/>
            <person name="Johnson C.M."/>
            <person name="Joy A.A."/>
            <person name="Kay M."/>
            <person name="Keenan S.J."/>
            <person name="Kimberley A.M."/>
            <person name="King A."/>
            <person name="Laird G.K."/>
            <person name="Langford C."/>
            <person name="Lawlor S."/>
            <person name="Leongamornlert D.A."/>
            <person name="Leversha M."/>
            <person name="Lloyd C.R."/>
            <person name="Lloyd D.M."/>
            <person name="Loveland J.E."/>
            <person name="Lovell J."/>
            <person name="Martin S."/>
            <person name="Mashreghi-Mohammadi M."/>
            <person name="Maslen G.L."/>
            <person name="Matthews L."/>
            <person name="McCann O.T."/>
            <person name="McLaren S.J."/>
            <person name="McLay K."/>
            <person name="McMurray A."/>
            <person name="Moore M.J.F."/>
            <person name="Mullikin J.C."/>
            <person name="Niblett D."/>
            <person name="Nickerson T."/>
            <person name="Novik K.L."/>
            <person name="Oliver K."/>
            <person name="Overton-Larty E.K."/>
            <person name="Parker A."/>
            <person name="Patel R."/>
            <person name="Pearce A.V."/>
            <person name="Peck A.I."/>
            <person name="Phillimore B.J.C.T."/>
            <person name="Phillips S."/>
            <person name="Plumb R.W."/>
            <person name="Porter K.M."/>
            <person name="Ramsey Y."/>
            <person name="Ranby S.A."/>
            <person name="Rice C.M."/>
            <person name="Ross M.T."/>
            <person name="Searle S.M."/>
            <person name="Sehra H.K."/>
            <person name="Sheridan E."/>
            <person name="Skuce C.D."/>
            <person name="Smith S."/>
            <person name="Smith M."/>
            <person name="Spraggon L."/>
            <person name="Squares S.L."/>
            <person name="Steward C.A."/>
            <person name="Sycamore N."/>
            <person name="Tamlyn-Hall G."/>
            <person name="Tester J."/>
            <person name="Theaker A.J."/>
            <person name="Thomas D.W."/>
            <person name="Thorpe A."/>
            <person name="Tracey A."/>
            <person name="Tromans A."/>
            <person name="Tubby B."/>
            <person name="Wall M."/>
            <person name="Wallis J.M."/>
            <person name="West A.P."/>
            <person name="White S.S."/>
            <person name="Whitehead S.L."/>
            <person name="Whittaker H."/>
            <person name="Wild A."/>
            <person name="Willey D.J."/>
            <person name="Wilmer T.E."/>
            <person name="Wood J.M."/>
            <person name="Wray P.W."/>
            <person name="Wyatt J.C."/>
            <person name="Young L."/>
            <person name="Younger R.M."/>
            <person name="Bentley D.R."/>
            <person name="Coulson A."/>
            <person name="Durbin R.M."/>
            <person name="Hubbard T."/>
            <person name="Sulston J.E."/>
            <person name="Dunham I."/>
            <person name="Rogers J."/>
            <person name="Beck S."/>
        </authorList>
    </citation>
    <scope>NUCLEOTIDE SEQUENCE [LARGE SCALE GENOMIC DNA]</scope>
</reference>
<reference key="5">
    <citation type="submission" date="2005-09" db="EMBL/GenBank/DDBJ databases">
        <authorList>
            <person name="Mural R.J."/>
            <person name="Istrail S."/>
            <person name="Sutton G.G."/>
            <person name="Florea L."/>
            <person name="Halpern A.L."/>
            <person name="Mobarry C.M."/>
            <person name="Lippert R."/>
            <person name="Walenz B."/>
            <person name="Shatkay H."/>
            <person name="Dew I."/>
            <person name="Miller J.R."/>
            <person name="Flanigan M.J."/>
            <person name="Edwards N.J."/>
            <person name="Bolanos R."/>
            <person name="Fasulo D."/>
            <person name="Halldorsson B.V."/>
            <person name="Hannenhalli S."/>
            <person name="Turner R."/>
            <person name="Yooseph S."/>
            <person name="Lu F."/>
            <person name="Nusskern D.R."/>
            <person name="Shue B.C."/>
            <person name="Zheng X.H."/>
            <person name="Zhong F."/>
            <person name="Delcher A.L."/>
            <person name="Huson D.H."/>
            <person name="Kravitz S.A."/>
            <person name="Mouchard L."/>
            <person name="Reinert K."/>
            <person name="Remington K.A."/>
            <person name="Clark A.G."/>
            <person name="Waterman M.S."/>
            <person name="Eichler E.E."/>
            <person name="Adams M.D."/>
            <person name="Hunkapiller M.W."/>
            <person name="Myers E.W."/>
            <person name="Venter J.C."/>
        </authorList>
    </citation>
    <scope>NUCLEOTIDE SEQUENCE [LARGE SCALE GENOMIC DNA]</scope>
</reference>
<reference key="6">
    <citation type="journal article" date="2004" name="Genome Res.">
        <title>The status, quality, and expansion of the NIH full-length cDNA project: the Mammalian Gene Collection (MGC).</title>
        <authorList>
            <consortium name="The MGC Project Team"/>
        </authorList>
    </citation>
    <scope>NUCLEOTIDE SEQUENCE [LARGE SCALE MRNA]</scope>
    <source>
        <tissue>Brain</tissue>
        <tissue>Eye</tissue>
        <tissue>Placenta</tissue>
    </source>
</reference>
<reference key="7">
    <citation type="journal article" date="2011" name="BMC Syst. Biol.">
        <title>Initial characterization of the human central proteome.</title>
        <authorList>
            <person name="Burkard T.R."/>
            <person name="Planyavsky M."/>
            <person name="Kaupe I."/>
            <person name="Breitwieser F.P."/>
            <person name="Buerckstuemmer T."/>
            <person name="Bennett K.L."/>
            <person name="Superti-Furga G."/>
            <person name="Colinge J."/>
        </authorList>
    </citation>
    <scope>IDENTIFICATION BY MASS SPECTROMETRY [LARGE SCALE ANALYSIS]</scope>
</reference>
<reference key="8">
    <citation type="submission" date="2005-11" db="PDB data bank">
        <title>Solution structure of the SH3 domain-binding glutamic acid-rich-like protein 2.</title>
        <authorList>
            <consortium name="RIKEN structural genomics initiative (RSGI)"/>
        </authorList>
    </citation>
    <scope>STRUCTURE BY NMR OF 1-98</scope>
</reference>
<organism>
    <name type="scientific">Homo sapiens</name>
    <name type="common">Human</name>
    <dbReference type="NCBI Taxonomy" id="9606"/>
    <lineage>
        <taxon>Eukaryota</taxon>
        <taxon>Metazoa</taxon>
        <taxon>Chordata</taxon>
        <taxon>Craniata</taxon>
        <taxon>Vertebrata</taxon>
        <taxon>Euteleostomi</taxon>
        <taxon>Mammalia</taxon>
        <taxon>Eutheria</taxon>
        <taxon>Euarchontoglires</taxon>
        <taxon>Primates</taxon>
        <taxon>Haplorrhini</taxon>
        <taxon>Catarrhini</taxon>
        <taxon>Hominidae</taxon>
        <taxon>Homo</taxon>
    </lineage>
</organism>